<name>RS12_STAMF</name>
<protein>
    <recommendedName>
        <fullName evidence="1">Small ribosomal subunit protein uS12</fullName>
    </recommendedName>
    <alternativeName>
        <fullName evidence="2">30S ribosomal protein S12</fullName>
    </alternativeName>
</protein>
<organism>
    <name type="scientific">Staphylothermus marinus (strain ATCC 43588 / DSM 3639 / JCM 9404 / F1)</name>
    <dbReference type="NCBI Taxonomy" id="399550"/>
    <lineage>
        <taxon>Archaea</taxon>
        <taxon>Thermoproteota</taxon>
        <taxon>Thermoprotei</taxon>
        <taxon>Desulfurococcales</taxon>
        <taxon>Desulfurococcaceae</taxon>
        <taxon>Staphylothermus</taxon>
    </lineage>
</organism>
<accession>A3DMP8</accession>
<gene>
    <name evidence="1" type="primary">rps12</name>
    <name type="ordered locus">Smar_0807</name>
</gene>
<keyword id="KW-1185">Reference proteome</keyword>
<keyword id="KW-0687">Ribonucleoprotein</keyword>
<keyword id="KW-0689">Ribosomal protein</keyword>
<keyword id="KW-0694">RNA-binding</keyword>
<keyword id="KW-0699">rRNA-binding</keyword>
<reference key="1">
    <citation type="journal article" date="2009" name="BMC Genomics">
        <title>The complete genome sequence of Staphylothermus marinus reveals differences in sulfur metabolism among heterotrophic Crenarchaeota.</title>
        <authorList>
            <person name="Anderson I.J."/>
            <person name="Dharmarajan L."/>
            <person name="Rodriguez J."/>
            <person name="Hooper S."/>
            <person name="Porat I."/>
            <person name="Ulrich L.E."/>
            <person name="Elkins J.G."/>
            <person name="Mavromatis K."/>
            <person name="Sun H."/>
            <person name="Land M."/>
            <person name="Lapidus A."/>
            <person name="Lucas S."/>
            <person name="Barry K."/>
            <person name="Huber H."/>
            <person name="Zhulin I.B."/>
            <person name="Whitman W.B."/>
            <person name="Mukhopadhyay B."/>
            <person name="Woese C."/>
            <person name="Bristow J."/>
            <person name="Kyrpides N."/>
        </authorList>
    </citation>
    <scope>NUCLEOTIDE SEQUENCE [LARGE SCALE GENOMIC DNA]</scope>
    <source>
        <strain>ATCC 43588 / DSM 3639 / JCM 9404 / F1</strain>
    </source>
</reference>
<reference key="2">
    <citation type="journal article" date="2009" name="Stand. Genomic Sci.">
        <title>Complete genome sequence of Staphylothermus marinus Stetter and Fiala 1986 type strain F1.</title>
        <authorList>
            <person name="Anderson I.J."/>
            <person name="Sun H."/>
            <person name="Lapidus A."/>
            <person name="Copeland A."/>
            <person name="Glavina Del Rio T."/>
            <person name="Tice H."/>
            <person name="Dalin E."/>
            <person name="Lucas S."/>
            <person name="Barry K."/>
            <person name="Land M."/>
            <person name="Richardson P."/>
            <person name="Huber H."/>
            <person name="Kyrpides N.C."/>
        </authorList>
    </citation>
    <scope>NUCLEOTIDE SEQUENCE [LARGE SCALE GENOMIC DNA]</scope>
    <source>
        <strain>ATCC 43588 / DSM 3639 / JCM 9404 / F1</strain>
    </source>
</reference>
<sequence length="147" mass="16376">MAGKKAPNGLFAARKLRRKRLKFRWSQREFKIKMLGLKKKHDPLEGAPMARGIVLEKVGVEARQPNSAVRKCVRVQLAKNGKVVTAFVPFDGGINYIDEHDEVIIEGIGGPRGRSMGDIPGVRYKVIMVNGVSLKALYLGKKQKPVR</sequence>
<evidence type="ECO:0000255" key="1">
    <source>
        <dbReference type="HAMAP-Rule" id="MF_00403"/>
    </source>
</evidence>
<evidence type="ECO:0000305" key="2"/>
<dbReference type="EMBL" id="CP000575">
    <property type="protein sequence ID" value="ABN69908.1"/>
    <property type="molecule type" value="Genomic_DNA"/>
</dbReference>
<dbReference type="RefSeq" id="WP_011839099.1">
    <property type="nucleotide sequence ID" value="NC_009033.1"/>
</dbReference>
<dbReference type="SMR" id="A3DMP8"/>
<dbReference type="STRING" id="399550.Smar_0807"/>
<dbReference type="GeneID" id="4907982"/>
<dbReference type="KEGG" id="smr:Smar_0807"/>
<dbReference type="eggNOG" id="arCOG04255">
    <property type="taxonomic scope" value="Archaea"/>
</dbReference>
<dbReference type="HOGENOM" id="CLU_115574_0_1_2"/>
<dbReference type="OrthoDB" id="45154at2157"/>
<dbReference type="Proteomes" id="UP000000254">
    <property type="component" value="Chromosome"/>
</dbReference>
<dbReference type="GO" id="GO:0015935">
    <property type="term" value="C:small ribosomal subunit"/>
    <property type="evidence" value="ECO:0007669"/>
    <property type="project" value="InterPro"/>
</dbReference>
<dbReference type="GO" id="GO:0019843">
    <property type="term" value="F:rRNA binding"/>
    <property type="evidence" value="ECO:0007669"/>
    <property type="project" value="UniProtKB-UniRule"/>
</dbReference>
<dbReference type="GO" id="GO:0003735">
    <property type="term" value="F:structural constituent of ribosome"/>
    <property type="evidence" value="ECO:0007669"/>
    <property type="project" value="InterPro"/>
</dbReference>
<dbReference type="GO" id="GO:0006412">
    <property type="term" value="P:translation"/>
    <property type="evidence" value="ECO:0007669"/>
    <property type="project" value="UniProtKB-UniRule"/>
</dbReference>
<dbReference type="CDD" id="cd03367">
    <property type="entry name" value="Ribosomal_S23"/>
    <property type="match status" value="1"/>
</dbReference>
<dbReference type="FunFam" id="2.40.50.140:FF:000007">
    <property type="entry name" value="40S ribosomal protein S23"/>
    <property type="match status" value="1"/>
</dbReference>
<dbReference type="Gene3D" id="2.40.50.140">
    <property type="entry name" value="Nucleic acid-binding proteins"/>
    <property type="match status" value="1"/>
</dbReference>
<dbReference type="HAMAP" id="MF_00403_A">
    <property type="entry name" value="Ribosomal_uS12_A"/>
    <property type="match status" value="1"/>
</dbReference>
<dbReference type="InterPro" id="IPR012340">
    <property type="entry name" value="NA-bd_OB-fold"/>
</dbReference>
<dbReference type="InterPro" id="IPR006032">
    <property type="entry name" value="Ribosomal_uS12"/>
</dbReference>
<dbReference type="InterPro" id="IPR022863">
    <property type="entry name" value="Ribosomal_uS12_arc"/>
</dbReference>
<dbReference type="InterPro" id="IPR005680">
    <property type="entry name" value="Ribosomal_uS12_euk/arc"/>
</dbReference>
<dbReference type="NCBIfam" id="NF003254">
    <property type="entry name" value="PRK04211.1"/>
    <property type="match status" value="1"/>
</dbReference>
<dbReference type="NCBIfam" id="TIGR00982">
    <property type="entry name" value="uS12_E_A"/>
    <property type="match status" value="1"/>
</dbReference>
<dbReference type="PANTHER" id="PTHR11652">
    <property type="entry name" value="30S RIBOSOMAL PROTEIN S12 FAMILY MEMBER"/>
    <property type="match status" value="1"/>
</dbReference>
<dbReference type="Pfam" id="PF00164">
    <property type="entry name" value="Ribosom_S12_S23"/>
    <property type="match status" value="1"/>
</dbReference>
<dbReference type="PIRSF" id="PIRSF002133">
    <property type="entry name" value="Ribosomal_S12/S23"/>
    <property type="match status" value="1"/>
</dbReference>
<dbReference type="SUPFAM" id="SSF50249">
    <property type="entry name" value="Nucleic acid-binding proteins"/>
    <property type="match status" value="1"/>
</dbReference>
<dbReference type="PROSITE" id="PS00055">
    <property type="entry name" value="RIBOSOMAL_S12"/>
    <property type="match status" value="1"/>
</dbReference>
<feature type="chain" id="PRO_0000296055" description="Small ribosomal subunit protein uS12">
    <location>
        <begin position="1"/>
        <end position="147"/>
    </location>
</feature>
<proteinExistence type="inferred from homology"/>
<comment type="function">
    <text evidence="1">With S4 and S5 plays an important role in translational accuracy. Located at the interface of the 30S and 50S subunits.</text>
</comment>
<comment type="subunit">
    <text evidence="1">Part of the 30S ribosomal subunit.</text>
</comment>
<comment type="similarity">
    <text evidence="1">Belongs to the universal ribosomal protein uS12 family.</text>
</comment>